<accession>Q14236</accession>
<gene>
    <name type="primary">DIAPH2-AS1</name>
    <name type="synonym">EPAG</name>
</gene>
<organism>
    <name type="scientific">Homo sapiens</name>
    <name type="common">Human</name>
    <dbReference type="NCBI Taxonomy" id="9606"/>
    <lineage>
        <taxon>Eukaryota</taxon>
        <taxon>Metazoa</taxon>
        <taxon>Chordata</taxon>
        <taxon>Craniata</taxon>
        <taxon>Vertebrata</taxon>
        <taxon>Euteleostomi</taxon>
        <taxon>Mammalia</taxon>
        <taxon>Eutheria</taxon>
        <taxon>Euarchontoglires</taxon>
        <taxon>Primates</taxon>
        <taxon>Haplorrhini</taxon>
        <taxon>Catarrhini</taxon>
        <taxon>Hominidae</taxon>
        <taxon>Homo</taxon>
    </lineage>
</organism>
<dbReference type="EMBL" id="AL391821">
    <property type="status" value="NOT_ANNOTATED_CDS"/>
    <property type="molecule type" value="Genomic_DNA"/>
</dbReference>
<dbReference type="EMBL" id="L22650">
    <property type="protein sequence ID" value="AAA20152.1"/>
    <property type="status" value="ALT_FRAME"/>
    <property type="molecule type" value="mRNA"/>
</dbReference>
<dbReference type="PIR" id="I56219">
    <property type="entry name" value="I56219"/>
</dbReference>
<dbReference type="BioMuta" id="HGNC:16972"/>
<dbReference type="MassIVE" id="Q14236"/>
<dbReference type="PeptideAtlas" id="Q14236"/>
<dbReference type="AGR" id="HGNC:16972"/>
<dbReference type="GeneCards" id="DIAPH2-AS1"/>
<dbReference type="HGNC" id="HGNC:16972">
    <property type="gene designation" value="DIAPH2-AS1"/>
</dbReference>
<dbReference type="MIM" id="300347">
    <property type="type" value="gene"/>
</dbReference>
<dbReference type="neXtProt" id="NX_Q14236"/>
<dbReference type="InParanoid" id="Q14236"/>
<dbReference type="PAN-GO" id="Q14236">
    <property type="GO annotations" value="0 GO annotations based on evolutionary models"/>
</dbReference>
<dbReference type="ChiTaRS" id="DIAPH2-AS1">
    <property type="organism name" value="human"/>
</dbReference>
<dbReference type="Pharos" id="Q14236">
    <property type="development level" value="Tdark"/>
</dbReference>
<dbReference type="PRO" id="PR:Q14236"/>
<dbReference type="Proteomes" id="UP000005640">
    <property type="component" value="Unplaced"/>
</dbReference>
<dbReference type="RNAct" id="Q14236">
    <property type="molecule type" value="protein"/>
</dbReference>
<dbReference type="GO" id="GO:0007165">
    <property type="term" value="P:signal transduction"/>
    <property type="evidence" value="ECO:0000303"/>
    <property type="project" value="UniProtKB"/>
</dbReference>
<sequence>MNLYLHPKLWPQLAGTKTLHVADAQRVRKITVHDGIWDAELPRAKRNHSYHLRYHGSSYSRCFLERYRCKTIGVFRRSNQPDCLETRSEKAKNRDGVVQEKSVRTLFSECVNQCDIRRRPTRFLRMFYHQKHFQLGLKGTETEKNERRL</sequence>
<evidence type="ECO:0000269" key="1">
    <source>
    </source>
</evidence>
<evidence type="ECO:0000305" key="2"/>
<feature type="chain" id="PRO_0000316949" description="Early lymphoid activation gene protein">
    <location>
        <begin position="1"/>
        <end position="149"/>
    </location>
</feature>
<feature type="sequence conflict" description="In Ref. 2; AAA20152." evidence="2" ref="2">
    <original>N</original>
    <variation>K</variation>
    <location>
        <position position="145"/>
    </location>
</feature>
<protein>
    <recommendedName>
        <fullName>Early lymphoid activation gene protein</fullName>
    </recommendedName>
    <alternativeName>
        <fullName>DIAPH2 antisense RNA 1</fullName>
    </alternativeName>
    <alternativeName>
        <fullName>DIAPH2 antisense gene protein 1</fullName>
    </alternativeName>
</protein>
<reference key="1">
    <citation type="journal article" date="2005" name="Nature">
        <title>The DNA sequence of the human X chromosome.</title>
        <authorList>
            <person name="Ross M.T."/>
            <person name="Grafham D.V."/>
            <person name="Coffey A.J."/>
            <person name="Scherer S."/>
            <person name="McLay K."/>
            <person name="Muzny D."/>
            <person name="Platzer M."/>
            <person name="Howell G.R."/>
            <person name="Burrows C."/>
            <person name="Bird C.P."/>
            <person name="Frankish A."/>
            <person name="Lovell F.L."/>
            <person name="Howe K.L."/>
            <person name="Ashurst J.L."/>
            <person name="Fulton R.S."/>
            <person name="Sudbrak R."/>
            <person name="Wen G."/>
            <person name="Jones M.C."/>
            <person name="Hurles M.E."/>
            <person name="Andrews T.D."/>
            <person name="Scott C.E."/>
            <person name="Searle S."/>
            <person name="Ramser J."/>
            <person name="Whittaker A."/>
            <person name="Deadman R."/>
            <person name="Carter N.P."/>
            <person name="Hunt S.E."/>
            <person name="Chen R."/>
            <person name="Cree A."/>
            <person name="Gunaratne P."/>
            <person name="Havlak P."/>
            <person name="Hodgson A."/>
            <person name="Metzker M.L."/>
            <person name="Richards S."/>
            <person name="Scott G."/>
            <person name="Steffen D."/>
            <person name="Sodergren E."/>
            <person name="Wheeler D.A."/>
            <person name="Worley K.C."/>
            <person name="Ainscough R."/>
            <person name="Ambrose K.D."/>
            <person name="Ansari-Lari M.A."/>
            <person name="Aradhya S."/>
            <person name="Ashwell R.I."/>
            <person name="Babbage A.K."/>
            <person name="Bagguley C.L."/>
            <person name="Ballabio A."/>
            <person name="Banerjee R."/>
            <person name="Barker G.E."/>
            <person name="Barlow K.F."/>
            <person name="Barrett I.P."/>
            <person name="Bates K.N."/>
            <person name="Beare D.M."/>
            <person name="Beasley H."/>
            <person name="Beasley O."/>
            <person name="Beck A."/>
            <person name="Bethel G."/>
            <person name="Blechschmidt K."/>
            <person name="Brady N."/>
            <person name="Bray-Allen S."/>
            <person name="Bridgeman A.M."/>
            <person name="Brown A.J."/>
            <person name="Brown M.J."/>
            <person name="Bonnin D."/>
            <person name="Bruford E.A."/>
            <person name="Buhay C."/>
            <person name="Burch P."/>
            <person name="Burford D."/>
            <person name="Burgess J."/>
            <person name="Burrill W."/>
            <person name="Burton J."/>
            <person name="Bye J.M."/>
            <person name="Carder C."/>
            <person name="Carrel L."/>
            <person name="Chako J."/>
            <person name="Chapman J.C."/>
            <person name="Chavez D."/>
            <person name="Chen E."/>
            <person name="Chen G."/>
            <person name="Chen Y."/>
            <person name="Chen Z."/>
            <person name="Chinault C."/>
            <person name="Ciccodicola A."/>
            <person name="Clark S.Y."/>
            <person name="Clarke G."/>
            <person name="Clee C.M."/>
            <person name="Clegg S."/>
            <person name="Clerc-Blankenburg K."/>
            <person name="Clifford K."/>
            <person name="Cobley V."/>
            <person name="Cole C.G."/>
            <person name="Conquer J.S."/>
            <person name="Corby N."/>
            <person name="Connor R.E."/>
            <person name="David R."/>
            <person name="Davies J."/>
            <person name="Davis C."/>
            <person name="Davis J."/>
            <person name="Delgado O."/>
            <person name="Deshazo D."/>
            <person name="Dhami P."/>
            <person name="Ding Y."/>
            <person name="Dinh H."/>
            <person name="Dodsworth S."/>
            <person name="Draper H."/>
            <person name="Dugan-Rocha S."/>
            <person name="Dunham A."/>
            <person name="Dunn M."/>
            <person name="Durbin K.J."/>
            <person name="Dutta I."/>
            <person name="Eades T."/>
            <person name="Ellwood M."/>
            <person name="Emery-Cohen A."/>
            <person name="Errington H."/>
            <person name="Evans K.L."/>
            <person name="Faulkner L."/>
            <person name="Francis F."/>
            <person name="Frankland J."/>
            <person name="Fraser A.E."/>
            <person name="Galgoczy P."/>
            <person name="Gilbert J."/>
            <person name="Gill R."/>
            <person name="Gloeckner G."/>
            <person name="Gregory S.G."/>
            <person name="Gribble S."/>
            <person name="Griffiths C."/>
            <person name="Grocock R."/>
            <person name="Gu Y."/>
            <person name="Gwilliam R."/>
            <person name="Hamilton C."/>
            <person name="Hart E.A."/>
            <person name="Hawes A."/>
            <person name="Heath P.D."/>
            <person name="Heitmann K."/>
            <person name="Hennig S."/>
            <person name="Hernandez J."/>
            <person name="Hinzmann B."/>
            <person name="Ho S."/>
            <person name="Hoffs M."/>
            <person name="Howden P.J."/>
            <person name="Huckle E.J."/>
            <person name="Hume J."/>
            <person name="Hunt P.J."/>
            <person name="Hunt A.R."/>
            <person name="Isherwood J."/>
            <person name="Jacob L."/>
            <person name="Johnson D."/>
            <person name="Jones S."/>
            <person name="de Jong P.J."/>
            <person name="Joseph S.S."/>
            <person name="Keenan S."/>
            <person name="Kelly S."/>
            <person name="Kershaw J.K."/>
            <person name="Khan Z."/>
            <person name="Kioschis P."/>
            <person name="Klages S."/>
            <person name="Knights A.J."/>
            <person name="Kosiura A."/>
            <person name="Kovar-Smith C."/>
            <person name="Laird G.K."/>
            <person name="Langford C."/>
            <person name="Lawlor S."/>
            <person name="Leversha M."/>
            <person name="Lewis L."/>
            <person name="Liu W."/>
            <person name="Lloyd C."/>
            <person name="Lloyd D.M."/>
            <person name="Loulseged H."/>
            <person name="Loveland J.E."/>
            <person name="Lovell J.D."/>
            <person name="Lozado R."/>
            <person name="Lu J."/>
            <person name="Lyne R."/>
            <person name="Ma J."/>
            <person name="Maheshwari M."/>
            <person name="Matthews L.H."/>
            <person name="McDowall J."/>
            <person name="McLaren S."/>
            <person name="McMurray A."/>
            <person name="Meidl P."/>
            <person name="Meitinger T."/>
            <person name="Milne S."/>
            <person name="Miner G."/>
            <person name="Mistry S.L."/>
            <person name="Morgan M."/>
            <person name="Morris S."/>
            <person name="Mueller I."/>
            <person name="Mullikin J.C."/>
            <person name="Nguyen N."/>
            <person name="Nordsiek G."/>
            <person name="Nyakatura G."/>
            <person name="O'dell C.N."/>
            <person name="Okwuonu G."/>
            <person name="Palmer S."/>
            <person name="Pandian R."/>
            <person name="Parker D."/>
            <person name="Parrish J."/>
            <person name="Pasternak S."/>
            <person name="Patel D."/>
            <person name="Pearce A.V."/>
            <person name="Pearson D.M."/>
            <person name="Pelan S.E."/>
            <person name="Perez L."/>
            <person name="Porter K.M."/>
            <person name="Ramsey Y."/>
            <person name="Reichwald K."/>
            <person name="Rhodes S."/>
            <person name="Ridler K.A."/>
            <person name="Schlessinger D."/>
            <person name="Schueler M.G."/>
            <person name="Sehra H.K."/>
            <person name="Shaw-Smith C."/>
            <person name="Shen H."/>
            <person name="Sheridan E.M."/>
            <person name="Shownkeen R."/>
            <person name="Skuce C.D."/>
            <person name="Smith M.L."/>
            <person name="Sotheran E.C."/>
            <person name="Steingruber H.E."/>
            <person name="Steward C.A."/>
            <person name="Storey R."/>
            <person name="Swann R.M."/>
            <person name="Swarbreck D."/>
            <person name="Tabor P.E."/>
            <person name="Taudien S."/>
            <person name="Taylor T."/>
            <person name="Teague B."/>
            <person name="Thomas K."/>
            <person name="Thorpe A."/>
            <person name="Timms K."/>
            <person name="Tracey A."/>
            <person name="Trevanion S."/>
            <person name="Tromans A.C."/>
            <person name="d'Urso M."/>
            <person name="Verduzco D."/>
            <person name="Villasana D."/>
            <person name="Waldron L."/>
            <person name="Wall M."/>
            <person name="Wang Q."/>
            <person name="Warren J."/>
            <person name="Warry G.L."/>
            <person name="Wei X."/>
            <person name="West A."/>
            <person name="Whitehead S.L."/>
            <person name="Whiteley M.N."/>
            <person name="Wilkinson J.E."/>
            <person name="Willey D.L."/>
            <person name="Williams G."/>
            <person name="Williams L."/>
            <person name="Williamson A."/>
            <person name="Williamson H."/>
            <person name="Wilming L."/>
            <person name="Woodmansey R.L."/>
            <person name="Wray P.W."/>
            <person name="Yen J."/>
            <person name="Zhang J."/>
            <person name="Zhou J."/>
            <person name="Zoghbi H."/>
            <person name="Zorilla S."/>
            <person name="Buck D."/>
            <person name="Reinhardt R."/>
            <person name="Poustka A."/>
            <person name="Rosenthal A."/>
            <person name="Lehrach H."/>
            <person name="Meindl A."/>
            <person name="Minx P.J."/>
            <person name="Hillier L.W."/>
            <person name="Willard H.F."/>
            <person name="Wilson R.K."/>
            <person name="Waterston R.H."/>
            <person name="Rice C.M."/>
            <person name="Vaudin M."/>
            <person name="Coulson A."/>
            <person name="Nelson D.L."/>
            <person name="Weinstock G."/>
            <person name="Sulston J.E."/>
            <person name="Durbin R.M."/>
            <person name="Hubbard T."/>
            <person name="Gibbs R.A."/>
            <person name="Beck S."/>
            <person name="Rogers J."/>
            <person name="Bentley D.R."/>
        </authorList>
    </citation>
    <scope>NUCLEOTIDE SEQUENCE [LARGE SCALE GENOMIC DNA]</scope>
</reference>
<reference key="2">
    <citation type="journal article" date="1994" name="J. Immunol.">
        <title>Properties of a novel gene isolated from a Hodgkin's disease cell line that is expressed early during lymphoid cell activation.</title>
        <authorList>
            <person name="Bennett J.S."/>
            <person name="Tredway T.L."/>
            <person name="Dizikes G.J."/>
            <person name="Nawrocki J.F."/>
        </authorList>
    </citation>
    <scope>NUCLEOTIDE SEQUENCE [MRNA] OF 41-149</scope>
    <scope>FUNCTION</scope>
    <scope>TISSUE SPECIFICITY</scope>
    <source>
        <tissue>Hematopoietic</tissue>
    </source>
</reference>
<proteinExistence type="evidence at transcript level"/>
<comment type="function">
    <text evidence="1">May function as an early signal that helps mediate the activation of T-cells.</text>
</comment>
<comment type="tissue specificity">
    <text evidence="1">Expressed in heart, kidney, lung, and skeletal muscle, with lower levels in pancreas and liver.</text>
</comment>
<comment type="sequence caution" evidence="2">
    <conflict type="frameshift">
        <sequence resource="EMBL-CDS" id="AAA20152"/>
    </conflict>
</comment>
<keyword id="KW-1185">Reference proteome</keyword>
<name>EPAG_HUMAN</name>